<sequence length="497" mass="56798">MDLQRGFVFLSLVLSFMIIETTAYRERQLLLLQPPQETAIDTANAVVTVQDRGLKTRRPEHKNAYATMMYMGTPRDYEFYVATRVLIRSLRSLHVEADLVVIASLDVPLRWVQTLEEEDGAKVVRVENVDNPYRRQTNFNSRFKLTLNKLYAWALSDYDRVVMLDADNLFLKKADELFQCGRFCAVFINPCIFHTGLFVLQPSVEVFKDMLHELQVGRKNPDGADQGFLVSYFSDLLDQPLFSPPSNGSVLNGHLRLPLGYQMDASYFYLKLRWNIPCGPNSVITFPGAVWLKPWYWWSWPVLPLGFSWHEQRRATIGYSAEMPLVIIQAMFYLGIIVVTRLARPNITKLCYRRSDRNLTTIQAGFKLIALLSVVAAYIFPFFTIPHTIHPLIGWSLYLMASFALSSISINTLLLPTLPVLTPWLGILGTLLVMAFPWYPDGVVRALSVFAYAFCCAPFVWVSFRKITSHLQVLIEKEVLFPRLGDSGVTSGFSKLY</sequence>
<dbReference type="EC" id="2.4.1.-"/>
<dbReference type="EMBL" id="AC006068">
    <property type="protein sequence ID" value="AAD15444.2"/>
    <property type="molecule type" value="Genomic_DNA"/>
</dbReference>
<dbReference type="EMBL" id="CP002685">
    <property type="protein sequence ID" value="AEC09148.1"/>
    <property type="molecule type" value="Genomic_DNA"/>
</dbReference>
<dbReference type="EMBL" id="CP002685">
    <property type="protein sequence ID" value="AEC09149.1"/>
    <property type="molecule type" value="Genomic_DNA"/>
</dbReference>
<dbReference type="EMBL" id="AY063949">
    <property type="protein sequence ID" value="AAL36305.1"/>
    <property type="molecule type" value="mRNA"/>
</dbReference>
<dbReference type="EMBL" id="AY096617">
    <property type="protein sequence ID" value="AAM20267.1"/>
    <property type="molecule type" value="mRNA"/>
</dbReference>
<dbReference type="EMBL" id="BX820880">
    <property type="status" value="NOT_ANNOTATED_CDS"/>
    <property type="molecule type" value="mRNA"/>
</dbReference>
<dbReference type="PIR" id="A84772">
    <property type="entry name" value="A84772"/>
</dbReference>
<dbReference type="RefSeq" id="NP_565817.2">
    <molecule id="Q8VZP6-1"/>
    <property type="nucleotide sequence ID" value="NM_129126.5"/>
</dbReference>
<dbReference type="RefSeq" id="NP_973607.1">
    <molecule id="Q8VZP6-2"/>
    <property type="nucleotide sequence ID" value="NM_201878.3"/>
</dbReference>
<dbReference type="SMR" id="Q8VZP6"/>
<dbReference type="BioGRID" id="3485">
    <property type="interactions" value="9"/>
</dbReference>
<dbReference type="FunCoup" id="Q8VZP6">
    <property type="interactions" value="11"/>
</dbReference>
<dbReference type="IntAct" id="Q8VZP6">
    <property type="interactions" value="9"/>
</dbReference>
<dbReference type="STRING" id="3702.Q8VZP6"/>
<dbReference type="CAZy" id="GT8">
    <property type="family name" value="Glycosyltransferase Family 8"/>
</dbReference>
<dbReference type="iPTMnet" id="Q8VZP6"/>
<dbReference type="PaxDb" id="3702-AT2G35710.1"/>
<dbReference type="ProteomicsDB" id="247325">
    <molecule id="Q8VZP6-1"/>
</dbReference>
<dbReference type="EnsemblPlants" id="AT2G35710.1">
    <molecule id="Q8VZP6-1"/>
    <property type="protein sequence ID" value="AT2G35710.1"/>
    <property type="gene ID" value="AT2G35710"/>
</dbReference>
<dbReference type="EnsemblPlants" id="AT2G35710.2">
    <molecule id="Q8VZP6-2"/>
    <property type="protein sequence ID" value="AT2G35710.2"/>
    <property type="gene ID" value="AT2G35710"/>
</dbReference>
<dbReference type="GeneID" id="818140"/>
<dbReference type="Gramene" id="AT2G35710.1">
    <molecule id="Q8VZP6-1"/>
    <property type="protein sequence ID" value="AT2G35710.1"/>
    <property type="gene ID" value="AT2G35710"/>
</dbReference>
<dbReference type="Gramene" id="AT2G35710.2">
    <molecule id="Q8VZP6-2"/>
    <property type="protein sequence ID" value="AT2G35710.2"/>
    <property type="gene ID" value="AT2G35710"/>
</dbReference>
<dbReference type="KEGG" id="ath:AT2G35710"/>
<dbReference type="Araport" id="AT2G35710"/>
<dbReference type="TAIR" id="AT2G35710">
    <property type="gene designation" value="PGSIP7"/>
</dbReference>
<dbReference type="eggNOG" id="KOG1950">
    <property type="taxonomic scope" value="Eukaryota"/>
</dbReference>
<dbReference type="InParanoid" id="Q8VZP6"/>
<dbReference type="OMA" id="HKARKYQ"/>
<dbReference type="PhylomeDB" id="Q8VZP6"/>
<dbReference type="PRO" id="PR:Q8VZP6"/>
<dbReference type="Proteomes" id="UP000006548">
    <property type="component" value="Chromosome 2"/>
</dbReference>
<dbReference type="ExpressionAtlas" id="Q8VZP6">
    <property type="expression patterns" value="baseline and differential"/>
</dbReference>
<dbReference type="GO" id="GO:0016020">
    <property type="term" value="C:membrane"/>
    <property type="evidence" value="ECO:0007669"/>
    <property type="project" value="UniProtKB-SubCell"/>
</dbReference>
<dbReference type="GO" id="GO:0016757">
    <property type="term" value="F:glycosyltransferase activity"/>
    <property type="evidence" value="ECO:0007669"/>
    <property type="project" value="UniProtKB-KW"/>
</dbReference>
<dbReference type="GO" id="GO:0046872">
    <property type="term" value="F:metal ion binding"/>
    <property type="evidence" value="ECO:0007669"/>
    <property type="project" value="UniProtKB-KW"/>
</dbReference>
<dbReference type="CDD" id="cd02537">
    <property type="entry name" value="GT8_Glycogenin"/>
    <property type="match status" value="1"/>
</dbReference>
<dbReference type="Gene3D" id="3.90.550.10">
    <property type="entry name" value="Spore Coat Polysaccharide Biosynthesis Protein SpsA, Chain A"/>
    <property type="match status" value="1"/>
</dbReference>
<dbReference type="InterPro" id="IPR050587">
    <property type="entry name" value="GNT1/Glycosyltrans_8"/>
</dbReference>
<dbReference type="InterPro" id="IPR029044">
    <property type="entry name" value="Nucleotide-diphossugar_trans"/>
</dbReference>
<dbReference type="PANTHER" id="PTHR11183">
    <property type="entry name" value="GLYCOGENIN SUBFAMILY MEMBER"/>
    <property type="match status" value="1"/>
</dbReference>
<dbReference type="SUPFAM" id="SSF53448">
    <property type="entry name" value="Nucleotide-diphospho-sugar transferases"/>
    <property type="match status" value="1"/>
</dbReference>
<comment type="cofactor">
    <cofactor evidence="2">
        <name>Mn(2+)</name>
        <dbReference type="ChEBI" id="CHEBI:29035"/>
    </cofactor>
</comment>
<comment type="subcellular location">
    <subcellularLocation>
        <location evidence="5">Membrane</location>
        <topology evidence="5">Multi-pass membrane protein</topology>
    </subcellularLocation>
</comment>
<comment type="alternative products">
    <event type="alternative splicing"/>
    <isoform>
        <id>Q8VZP6-1</id>
        <name>1</name>
        <sequence type="displayed"/>
    </isoform>
    <isoform>
        <id>Q8VZP6-2</id>
        <name>2</name>
        <sequence type="described" ref="VSP_042768"/>
    </isoform>
</comment>
<comment type="similarity">
    <text evidence="5">Belongs to the glycosyltransferase 8 family. Glycogenin subfamily.</text>
</comment>
<comment type="sequence caution" evidence="5">
    <conflict type="miscellaneous discrepancy">
        <sequence resource="EMBL" id="BX820880"/>
    </conflict>
    <text>Sequencing errors.</text>
</comment>
<accession>Q8VZP6</accession>
<accession>Q9ZQP4</accession>
<evidence type="ECO:0000250" key="1">
    <source>
        <dbReference type="UniProtKB" id="P13280"/>
    </source>
</evidence>
<evidence type="ECO:0000250" key="2">
    <source>
        <dbReference type="UniProtKB" id="P46976"/>
    </source>
</evidence>
<evidence type="ECO:0000255" key="3"/>
<evidence type="ECO:0000303" key="4">
    <source>
    </source>
</evidence>
<evidence type="ECO:0000305" key="5"/>
<proteinExistence type="evidence at transcript level"/>
<gene>
    <name type="primary">PGSIP8</name>
    <name type="ordered locus">At2g35710</name>
    <name type="ORF">T20F21.27</name>
</gene>
<reference key="1">
    <citation type="journal article" date="1999" name="Nature">
        <title>Sequence and analysis of chromosome 2 of the plant Arabidopsis thaliana.</title>
        <authorList>
            <person name="Lin X."/>
            <person name="Kaul S."/>
            <person name="Rounsley S.D."/>
            <person name="Shea T.P."/>
            <person name="Benito M.-I."/>
            <person name="Town C.D."/>
            <person name="Fujii C.Y."/>
            <person name="Mason T.M."/>
            <person name="Bowman C.L."/>
            <person name="Barnstead M.E."/>
            <person name="Feldblyum T.V."/>
            <person name="Buell C.R."/>
            <person name="Ketchum K.A."/>
            <person name="Lee J.J."/>
            <person name="Ronning C.M."/>
            <person name="Koo H.L."/>
            <person name="Moffat K.S."/>
            <person name="Cronin L.A."/>
            <person name="Shen M."/>
            <person name="Pai G."/>
            <person name="Van Aken S."/>
            <person name="Umayam L."/>
            <person name="Tallon L.J."/>
            <person name="Gill J.E."/>
            <person name="Adams M.D."/>
            <person name="Carrera A.J."/>
            <person name="Creasy T.H."/>
            <person name="Goodman H.M."/>
            <person name="Somerville C.R."/>
            <person name="Copenhaver G.P."/>
            <person name="Preuss D."/>
            <person name="Nierman W.C."/>
            <person name="White O."/>
            <person name="Eisen J.A."/>
            <person name="Salzberg S.L."/>
            <person name="Fraser C.M."/>
            <person name="Venter J.C."/>
        </authorList>
    </citation>
    <scope>NUCLEOTIDE SEQUENCE [LARGE SCALE GENOMIC DNA]</scope>
    <source>
        <strain>cv. Columbia</strain>
    </source>
</reference>
<reference key="2">
    <citation type="journal article" date="2017" name="Plant J.">
        <title>Araport11: a complete reannotation of the Arabidopsis thaliana reference genome.</title>
        <authorList>
            <person name="Cheng C.Y."/>
            <person name="Krishnakumar V."/>
            <person name="Chan A.P."/>
            <person name="Thibaud-Nissen F."/>
            <person name="Schobel S."/>
            <person name="Town C.D."/>
        </authorList>
    </citation>
    <scope>GENOME REANNOTATION</scope>
    <source>
        <strain>cv. Columbia</strain>
    </source>
</reference>
<reference key="3">
    <citation type="journal article" date="2003" name="Science">
        <title>Empirical analysis of transcriptional activity in the Arabidopsis genome.</title>
        <authorList>
            <person name="Yamada K."/>
            <person name="Lim J."/>
            <person name="Dale J.M."/>
            <person name="Chen H."/>
            <person name="Shinn P."/>
            <person name="Palm C.J."/>
            <person name="Southwick A.M."/>
            <person name="Wu H.C."/>
            <person name="Kim C.J."/>
            <person name="Nguyen M."/>
            <person name="Pham P.K."/>
            <person name="Cheuk R.F."/>
            <person name="Karlin-Newmann G."/>
            <person name="Liu S.X."/>
            <person name="Lam B."/>
            <person name="Sakano H."/>
            <person name="Wu T."/>
            <person name="Yu G."/>
            <person name="Miranda M."/>
            <person name="Quach H.L."/>
            <person name="Tripp M."/>
            <person name="Chang C.H."/>
            <person name="Lee J.M."/>
            <person name="Toriumi M.J."/>
            <person name="Chan M.M."/>
            <person name="Tang C.C."/>
            <person name="Onodera C.S."/>
            <person name="Deng J.M."/>
            <person name="Akiyama K."/>
            <person name="Ansari Y."/>
            <person name="Arakawa T."/>
            <person name="Banh J."/>
            <person name="Banno F."/>
            <person name="Bowser L."/>
            <person name="Brooks S.Y."/>
            <person name="Carninci P."/>
            <person name="Chao Q."/>
            <person name="Choy N."/>
            <person name="Enju A."/>
            <person name="Goldsmith A.D."/>
            <person name="Gurjal M."/>
            <person name="Hansen N.F."/>
            <person name="Hayashizaki Y."/>
            <person name="Johnson-Hopson C."/>
            <person name="Hsuan V.W."/>
            <person name="Iida K."/>
            <person name="Karnes M."/>
            <person name="Khan S."/>
            <person name="Koesema E."/>
            <person name="Ishida J."/>
            <person name="Jiang P.X."/>
            <person name="Jones T."/>
            <person name="Kawai J."/>
            <person name="Kamiya A."/>
            <person name="Meyers C."/>
            <person name="Nakajima M."/>
            <person name="Narusaka M."/>
            <person name="Seki M."/>
            <person name="Sakurai T."/>
            <person name="Satou M."/>
            <person name="Tamse R."/>
            <person name="Vaysberg M."/>
            <person name="Wallender E.K."/>
            <person name="Wong C."/>
            <person name="Yamamura Y."/>
            <person name="Yuan S."/>
            <person name="Shinozaki K."/>
            <person name="Davis R.W."/>
            <person name="Theologis A."/>
            <person name="Ecker J.R."/>
        </authorList>
    </citation>
    <scope>NUCLEOTIDE SEQUENCE [LARGE SCALE MRNA] (ISOFORM 1)</scope>
    <source>
        <strain>cv. Columbia</strain>
    </source>
</reference>
<reference key="4">
    <citation type="journal article" date="2004" name="Genome Res.">
        <title>Whole genome sequence comparisons and 'full-length' cDNA sequences: a combined approach to evaluate and improve Arabidopsis genome annotation.</title>
        <authorList>
            <person name="Castelli V."/>
            <person name="Aury J.-M."/>
            <person name="Jaillon O."/>
            <person name="Wincker P."/>
            <person name="Clepet C."/>
            <person name="Menard M."/>
            <person name="Cruaud C."/>
            <person name="Quetier F."/>
            <person name="Scarpelli C."/>
            <person name="Schaechter V."/>
            <person name="Temple G."/>
            <person name="Caboche M."/>
            <person name="Weissenbach J."/>
            <person name="Salanoubat M."/>
        </authorList>
    </citation>
    <scope>NUCLEOTIDE SEQUENCE [LARGE SCALE MRNA] (ISOFORM 2)</scope>
    <source>
        <strain>cv. Columbia</strain>
    </source>
</reference>
<reference key="5">
    <citation type="journal article" date="2005" name="Plant Sci.">
        <title>Reduced expression of a protein homologous to glycogenin leads to reduction of starch content in Arabidopsis leaves.</title>
        <authorList>
            <person name="Chatterjee M."/>
            <person name="Berbezy P."/>
            <person name="Vyas D."/>
            <person name="Coates S."/>
            <person name="Barsby T."/>
        </authorList>
        <dbReference type="AGRICOLA" id="IND43669941"/>
    </citation>
    <scope>GENE FAMILY</scope>
</reference>
<keyword id="KW-0025">Alternative splicing</keyword>
<keyword id="KW-0328">Glycosyltransferase</keyword>
<keyword id="KW-0464">Manganese</keyword>
<keyword id="KW-0472">Membrane</keyword>
<keyword id="KW-0479">Metal-binding</keyword>
<keyword id="KW-1185">Reference proteome</keyword>
<keyword id="KW-0808">Transferase</keyword>
<keyword id="KW-0812">Transmembrane</keyword>
<keyword id="KW-1133">Transmembrane helix</keyword>
<protein>
    <recommendedName>
        <fullName>Putative glucuronosyltransferase PGSIP8</fullName>
        <ecNumber>2.4.1.-</ecNumber>
    </recommendedName>
    <alternativeName>
        <fullName>Glycogenin-like protein 8</fullName>
    </alternativeName>
    <alternativeName>
        <fullName>Plant glycogenin-like starch initiation protein 8</fullName>
    </alternativeName>
</protein>
<feature type="chain" id="PRO_0000416740" description="Putative glucuronosyltransferase PGSIP8">
    <location>
        <begin position="1"/>
        <end position="497"/>
    </location>
</feature>
<feature type="transmembrane region" description="Helical" evidence="3">
    <location>
        <begin position="3"/>
        <end position="23"/>
    </location>
</feature>
<feature type="transmembrane region" description="Helical" evidence="3">
    <location>
        <begin position="319"/>
        <end position="339"/>
    </location>
</feature>
<feature type="transmembrane region" description="Helical" evidence="3">
    <location>
        <begin position="365"/>
        <end position="385"/>
    </location>
</feature>
<feature type="transmembrane region" description="Helical" evidence="3">
    <location>
        <begin position="388"/>
        <end position="408"/>
    </location>
</feature>
<feature type="transmembrane region" description="Helical" evidence="3">
    <location>
        <begin position="418"/>
        <end position="438"/>
    </location>
</feature>
<feature type="transmembrane region" description="Helical" evidence="3">
    <location>
        <begin position="442"/>
        <end position="462"/>
    </location>
</feature>
<feature type="binding site" evidence="2">
    <location>
        <position position="165"/>
    </location>
    <ligand>
        <name>Mn(2+)</name>
        <dbReference type="ChEBI" id="CHEBI:29035"/>
    </ligand>
</feature>
<feature type="binding site" evidence="2">
    <location>
        <position position="167"/>
    </location>
    <ligand>
        <name>Mn(2+)</name>
        <dbReference type="ChEBI" id="CHEBI:29035"/>
    </ligand>
</feature>
<feature type="site" description="Important for catalytic activity" evidence="1">
    <location>
        <position position="149"/>
    </location>
</feature>
<feature type="splice variant" id="VSP_042768" description="In isoform 2." evidence="4">
    <original>MDLQRGFVFLSLVLSFMIIETTAYRERQLLLLQPPQETAIDTANAVVTVQDRGLKTRRPEHKNAYATMMYMGTPRDYEFYVATRVLIRSLRSLHVEADLVVIASLDVPLRWVQTL</original>
    <variation>MSLFVSR</variation>
    <location>
        <begin position="1"/>
        <end position="115"/>
    </location>
</feature>
<organism>
    <name type="scientific">Arabidopsis thaliana</name>
    <name type="common">Mouse-ear cress</name>
    <dbReference type="NCBI Taxonomy" id="3702"/>
    <lineage>
        <taxon>Eukaryota</taxon>
        <taxon>Viridiplantae</taxon>
        <taxon>Streptophyta</taxon>
        <taxon>Embryophyta</taxon>
        <taxon>Tracheophyta</taxon>
        <taxon>Spermatophyta</taxon>
        <taxon>Magnoliopsida</taxon>
        <taxon>eudicotyledons</taxon>
        <taxon>Gunneridae</taxon>
        <taxon>Pentapetalae</taxon>
        <taxon>rosids</taxon>
        <taxon>malvids</taxon>
        <taxon>Brassicales</taxon>
        <taxon>Brassicaceae</taxon>
        <taxon>Camelineae</taxon>
        <taxon>Arabidopsis</taxon>
    </lineage>
</organism>
<name>GUX8_ARATH</name>